<accession>C3PAV0</accession>
<proteinExistence type="inferred from homology"/>
<dbReference type="EMBL" id="CP001598">
    <property type="protein sequence ID" value="ACQ47822.1"/>
    <property type="molecule type" value="Genomic_DNA"/>
</dbReference>
<dbReference type="RefSeq" id="WP_000917306.1">
    <property type="nucleotide sequence ID" value="NC_012659.1"/>
</dbReference>
<dbReference type="SMR" id="C3PAV0"/>
<dbReference type="GeneID" id="93010771"/>
<dbReference type="KEGG" id="bai:BAA_0308"/>
<dbReference type="HOGENOM" id="CLU_132825_2_0_9"/>
<dbReference type="GO" id="GO:0005737">
    <property type="term" value="C:cytoplasm"/>
    <property type="evidence" value="ECO:0007669"/>
    <property type="project" value="UniProtKB-SubCell"/>
</dbReference>
<dbReference type="GO" id="GO:0005524">
    <property type="term" value="F:ATP binding"/>
    <property type="evidence" value="ECO:0007669"/>
    <property type="project" value="InterPro"/>
</dbReference>
<dbReference type="GO" id="GO:0046872">
    <property type="term" value="F:metal ion binding"/>
    <property type="evidence" value="ECO:0007669"/>
    <property type="project" value="TreeGrafter"/>
</dbReference>
<dbReference type="GO" id="GO:0044183">
    <property type="term" value="F:protein folding chaperone"/>
    <property type="evidence" value="ECO:0007669"/>
    <property type="project" value="InterPro"/>
</dbReference>
<dbReference type="GO" id="GO:0051087">
    <property type="term" value="F:protein-folding chaperone binding"/>
    <property type="evidence" value="ECO:0007669"/>
    <property type="project" value="TreeGrafter"/>
</dbReference>
<dbReference type="GO" id="GO:0051082">
    <property type="term" value="F:unfolded protein binding"/>
    <property type="evidence" value="ECO:0007669"/>
    <property type="project" value="TreeGrafter"/>
</dbReference>
<dbReference type="GO" id="GO:0051085">
    <property type="term" value="P:chaperone cofactor-dependent protein refolding"/>
    <property type="evidence" value="ECO:0007669"/>
    <property type="project" value="TreeGrafter"/>
</dbReference>
<dbReference type="CDD" id="cd00320">
    <property type="entry name" value="cpn10"/>
    <property type="match status" value="1"/>
</dbReference>
<dbReference type="FunFam" id="2.30.33.40:FF:000001">
    <property type="entry name" value="10 kDa chaperonin"/>
    <property type="match status" value="1"/>
</dbReference>
<dbReference type="Gene3D" id="2.30.33.40">
    <property type="entry name" value="GroES chaperonin"/>
    <property type="match status" value="1"/>
</dbReference>
<dbReference type="HAMAP" id="MF_00580">
    <property type="entry name" value="CH10"/>
    <property type="match status" value="1"/>
</dbReference>
<dbReference type="InterPro" id="IPR020818">
    <property type="entry name" value="Chaperonin_GroES"/>
</dbReference>
<dbReference type="InterPro" id="IPR037124">
    <property type="entry name" value="Chaperonin_GroES_sf"/>
</dbReference>
<dbReference type="InterPro" id="IPR018369">
    <property type="entry name" value="Chaprnonin_Cpn10_CS"/>
</dbReference>
<dbReference type="InterPro" id="IPR011032">
    <property type="entry name" value="GroES-like_sf"/>
</dbReference>
<dbReference type="NCBIfam" id="NF001527">
    <property type="entry name" value="PRK00364.1-2"/>
    <property type="match status" value="1"/>
</dbReference>
<dbReference type="NCBIfam" id="NF001530">
    <property type="entry name" value="PRK00364.1-6"/>
    <property type="match status" value="1"/>
</dbReference>
<dbReference type="NCBIfam" id="NF001531">
    <property type="entry name" value="PRK00364.2-2"/>
    <property type="match status" value="1"/>
</dbReference>
<dbReference type="NCBIfam" id="NF001533">
    <property type="entry name" value="PRK00364.2-4"/>
    <property type="match status" value="1"/>
</dbReference>
<dbReference type="NCBIfam" id="NF001534">
    <property type="entry name" value="PRK00364.2-5"/>
    <property type="match status" value="1"/>
</dbReference>
<dbReference type="PANTHER" id="PTHR10772">
    <property type="entry name" value="10 KDA HEAT SHOCK PROTEIN"/>
    <property type="match status" value="1"/>
</dbReference>
<dbReference type="PANTHER" id="PTHR10772:SF58">
    <property type="entry name" value="CO-CHAPERONIN GROES"/>
    <property type="match status" value="1"/>
</dbReference>
<dbReference type="Pfam" id="PF00166">
    <property type="entry name" value="Cpn10"/>
    <property type="match status" value="1"/>
</dbReference>
<dbReference type="PRINTS" id="PR00297">
    <property type="entry name" value="CHAPERONIN10"/>
</dbReference>
<dbReference type="SMART" id="SM00883">
    <property type="entry name" value="Cpn10"/>
    <property type="match status" value="1"/>
</dbReference>
<dbReference type="SUPFAM" id="SSF50129">
    <property type="entry name" value="GroES-like"/>
    <property type="match status" value="1"/>
</dbReference>
<dbReference type="PROSITE" id="PS00681">
    <property type="entry name" value="CHAPERONINS_CPN10"/>
    <property type="match status" value="1"/>
</dbReference>
<protein>
    <recommendedName>
        <fullName evidence="1">Co-chaperonin GroES</fullName>
    </recommendedName>
    <alternativeName>
        <fullName evidence="1">10 kDa chaperonin</fullName>
    </alternativeName>
    <alternativeName>
        <fullName evidence="1">Chaperonin-10</fullName>
        <shortName evidence="1">Cpn10</shortName>
    </alternativeName>
</protein>
<name>CH10_BACAA</name>
<organism>
    <name type="scientific">Bacillus anthracis (strain A0248)</name>
    <dbReference type="NCBI Taxonomy" id="592021"/>
    <lineage>
        <taxon>Bacteria</taxon>
        <taxon>Bacillati</taxon>
        <taxon>Bacillota</taxon>
        <taxon>Bacilli</taxon>
        <taxon>Bacillales</taxon>
        <taxon>Bacillaceae</taxon>
        <taxon>Bacillus</taxon>
        <taxon>Bacillus cereus group</taxon>
    </lineage>
</organism>
<gene>
    <name evidence="1" type="primary">groES</name>
    <name evidence="1" type="synonym">groS</name>
    <name type="ordered locus">BAA_0308</name>
</gene>
<keyword id="KW-0143">Chaperone</keyword>
<keyword id="KW-0963">Cytoplasm</keyword>
<evidence type="ECO:0000255" key="1">
    <source>
        <dbReference type="HAMAP-Rule" id="MF_00580"/>
    </source>
</evidence>
<comment type="function">
    <text evidence="1">Together with the chaperonin GroEL, plays an essential role in assisting protein folding. The GroEL-GroES system forms a nano-cage that allows encapsulation of the non-native substrate proteins and provides a physical environment optimized to promote and accelerate protein folding. GroES binds to the apical surface of the GroEL ring, thereby capping the opening of the GroEL channel.</text>
</comment>
<comment type="subunit">
    <text evidence="1">Heptamer of 7 subunits arranged in a ring. Interacts with the chaperonin GroEL.</text>
</comment>
<comment type="subcellular location">
    <subcellularLocation>
        <location evidence="1">Cytoplasm</location>
    </subcellularLocation>
</comment>
<comment type="similarity">
    <text evidence="1">Belongs to the GroES chaperonin family.</text>
</comment>
<sequence>MLKPLGDRVVIELVQAEEKTASGIVLPDTAKEKPQEGKVIAVGTGRVLENGERVALEVAAGDLIIFSKYAGTEVKYEGTDYLILRESDILAVIG</sequence>
<feature type="chain" id="PRO_1000146884" description="Co-chaperonin GroES">
    <location>
        <begin position="1"/>
        <end position="94"/>
    </location>
</feature>
<reference key="1">
    <citation type="submission" date="2009-04" db="EMBL/GenBank/DDBJ databases">
        <title>Genome sequence of Bacillus anthracis A0248.</title>
        <authorList>
            <person name="Dodson R.J."/>
            <person name="Munk A.C."/>
            <person name="Bruce D."/>
            <person name="Detter C."/>
            <person name="Tapia R."/>
            <person name="Sutton G."/>
            <person name="Sims D."/>
            <person name="Brettin T."/>
        </authorList>
    </citation>
    <scope>NUCLEOTIDE SEQUENCE [LARGE SCALE GENOMIC DNA]</scope>
    <source>
        <strain>A0248</strain>
    </source>
</reference>